<accession>P54511</accession>
<accession>O32018</accession>
<feature type="chain" id="PRO_0000049820" description="Octanoyltransferase LipM">
    <location>
        <begin position="1"/>
        <end position="278"/>
    </location>
</feature>
<feature type="domain" description="BPL/LPL catalytic" evidence="1">
    <location>
        <begin position="33"/>
        <end position="248"/>
    </location>
</feature>
<feature type="active site" description="Acyl-thioester intermediate" evidence="2">
    <location>
        <position position="150"/>
    </location>
</feature>
<feature type="site" description="Lowers pKa of active site Cys" evidence="5">
    <location>
        <position position="165"/>
    </location>
</feature>
<feature type="mutagenesis site" description="Loss of catalytic activity. Inability to form the acyl-enzyme intermediate." evidence="2">
    <original>C</original>
    <variation>A</variation>
    <variation>S</variation>
    <location>
        <position position="150"/>
    </location>
</feature>
<feature type="mutagenesis site" description="Reduced catalytic activity." evidence="2">
    <original>K</original>
    <variation>A</variation>
    <location>
        <position position="165"/>
    </location>
</feature>
<feature type="mutagenesis site" description="No effect on catalytic activity." evidence="2">
    <original>K</original>
    <variation>R</variation>
    <location>
        <position position="165"/>
    </location>
</feature>
<reference key="1">
    <citation type="journal article" date="1996" name="Microbiology">
        <title>Systematic sequencing of the 283 kb 210 degrees-232 degrees region of the Bacillus subtilis genome containing the skin element and many sporulation genes.</title>
        <authorList>
            <person name="Mizuno M."/>
            <person name="Masuda S."/>
            <person name="Takemaru K."/>
            <person name="Hosono S."/>
            <person name="Sato T."/>
            <person name="Takeuchi M."/>
            <person name="Kobayashi Y."/>
        </authorList>
    </citation>
    <scope>NUCLEOTIDE SEQUENCE [GENOMIC DNA]</scope>
    <source>
        <strain>168 / JH642</strain>
    </source>
</reference>
<reference key="2">
    <citation type="journal article" date="1997" name="Nature">
        <title>The complete genome sequence of the Gram-positive bacterium Bacillus subtilis.</title>
        <authorList>
            <person name="Kunst F."/>
            <person name="Ogasawara N."/>
            <person name="Moszer I."/>
            <person name="Albertini A.M."/>
            <person name="Alloni G."/>
            <person name="Azevedo V."/>
            <person name="Bertero M.G."/>
            <person name="Bessieres P."/>
            <person name="Bolotin A."/>
            <person name="Borchert S."/>
            <person name="Borriss R."/>
            <person name="Boursier L."/>
            <person name="Brans A."/>
            <person name="Braun M."/>
            <person name="Brignell S.C."/>
            <person name="Bron S."/>
            <person name="Brouillet S."/>
            <person name="Bruschi C.V."/>
            <person name="Caldwell B."/>
            <person name="Capuano V."/>
            <person name="Carter N.M."/>
            <person name="Choi S.-K."/>
            <person name="Codani J.-J."/>
            <person name="Connerton I.F."/>
            <person name="Cummings N.J."/>
            <person name="Daniel R.A."/>
            <person name="Denizot F."/>
            <person name="Devine K.M."/>
            <person name="Duesterhoeft A."/>
            <person name="Ehrlich S.D."/>
            <person name="Emmerson P.T."/>
            <person name="Entian K.-D."/>
            <person name="Errington J."/>
            <person name="Fabret C."/>
            <person name="Ferrari E."/>
            <person name="Foulger D."/>
            <person name="Fritz C."/>
            <person name="Fujita M."/>
            <person name="Fujita Y."/>
            <person name="Fuma S."/>
            <person name="Galizzi A."/>
            <person name="Galleron N."/>
            <person name="Ghim S.-Y."/>
            <person name="Glaser P."/>
            <person name="Goffeau A."/>
            <person name="Golightly E.J."/>
            <person name="Grandi G."/>
            <person name="Guiseppi G."/>
            <person name="Guy B.J."/>
            <person name="Haga K."/>
            <person name="Haiech J."/>
            <person name="Harwood C.R."/>
            <person name="Henaut A."/>
            <person name="Hilbert H."/>
            <person name="Holsappel S."/>
            <person name="Hosono S."/>
            <person name="Hullo M.-F."/>
            <person name="Itaya M."/>
            <person name="Jones L.-M."/>
            <person name="Joris B."/>
            <person name="Karamata D."/>
            <person name="Kasahara Y."/>
            <person name="Klaerr-Blanchard M."/>
            <person name="Klein C."/>
            <person name="Kobayashi Y."/>
            <person name="Koetter P."/>
            <person name="Koningstein G."/>
            <person name="Krogh S."/>
            <person name="Kumano M."/>
            <person name="Kurita K."/>
            <person name="Lapidus A."/>
            <person name="Lardinois S."/>
            <person name="Lauber J."/>
            <person name="Lazarevic V."/>
            <person name="Lee S.-M."/>
            <person name="Levine A."/>
            <person name="Liu H."/>
            <person name="Masuda S."/>
            <person name="Mauel C."/>
            <person name="Medigue C."/>
            <person name="Medina N."/>
            <person name="Mellado R.P."/>
            <person name="Mizuno M."/>
            <person name="Moestl D."/>
            <person name="Nakai S."/>
            <person name="Noback M."/>
            <person name="Noone D."/>
            <person name="O'Reilly M."/>
            <person name="Ogawa K."/>
            <person name="Ogiwara A."/>
            <person name="Oudega B."/>
            <person name="Park S.-H."/>
            <person name="Parro V."/>
            <person name="Pohl T.M."/>
            <person name="Portetelle D."/>
            <person name="Porwollik S."/>
            <person name="Prescott A.M."/>
            <person name="Presecan E."/>
            <person name="Pujic P."/>
            <person name="Purnelle B."/>
            <person name="Rapoport G."/>
            <person name="Rey M."/>
            <person name="Reynolds S."/>
            <person name="Rieger M."/>
            <person name="Rivolta C."/>
            <person name="Rocha E."/>
            <person name="Roche B."/>
            <person name="Rose M."/>
            <person name="Sadaie Y."/>
            <person name="Sato T."/>
            <person name="Scanlan E."/>
            <person name="Schleich S."/>
            <person name="Schroeter R."/>
            <person name="Scoffone F."/>
            <person name="Sekiguchi J."/>
            <person name="Sekowska A."/>
            <person name="Seror S.J."/>
            <person name="Serror P."/>
            <person name="Shin B.-S."/>
            <person name="Soldo B."/>
            <person name="Sorokin A."/>
            <person name="Tacconi E."/>
            <person name="Takagi T."/>
            <person name="Takahashi H."/>
            <person name="Takemaru K."/>
            <person name="Takeuchi M."/>
            <person name="Tamakoshi A."/>
            <person name="Tanaka T."/>
            <person name="Terpstra P."/>
            <person name="Tognoni A."/>
            <person name="Tosato V."/>
            <person name="Uchiyama S."/>
            <person name="Vandenbol M."/>
            <person name="Vannier F."/>
            <person name="Vassarotti A."/>
            <person name="Viari A."/>
            <person name="Wambutt R."/>
            <person name="Wedler E."/>
            <person name="Wedler H."/>
            <person name="Weitzenegger T."/>
            <person name="Winters P."/>
            <person name="Wipat A."/>
            <person name="Yamamoto H."/>
            <person name="Yamane K."/>
            <person name="Yasumoto K."/>
            <person name="Yata K."/>
            <person name="Yoshida K."/>
            <person name="Yoshikawa H.-F."/>
            <person name="Zumstein E."/>
            <person name="Yoshikawa H."/>
            <person name="Danchin A."/>
        </authorList>
    </citation>
    <scope>NUCLEOTIDE SEQUENCE [LARGE SCALE GENOMIC DNA]</scope>
    <source>
        <strain>168</strain>
    </source>
</reference>
<reference key="3">
    <citation type="journal article" date="2010" name="Biochemistry">
        <title>Lipoic acid synthesis: a new family of octanoyltransferases generally annotated as lipoate protein ligases.</title>
        <authorList>
            <person name="Christensen Q.H."/>
            <person name="Cronan J.E."/>
        </authorList>
    </citation>
    <scope>IDENTIFICATION</scope>
    <scope>GENE NAME</scope>
    <scope>FUNCTION</scope>
    <scope>CATALYTIC ACTIVITY</scope>
    <scope>SUBSTRATE SPECIFICITY</scope>
    <scope>PATHWAY</scope>
    <scope>REACTION MECHANISM</scope>
    <scope>ACTIVE SITE</scope>
    <scope>SUBUNIT</scope>
    <scope>MUTAGENESIS OF CYS-150 AND LYS-165</scope>
    <source>
        <strain>168</strain>
    </source>
</reference>
<reference key="4">
    <citation type="journal article" date="2011" name="Mol. Microbiol.">
        <title>A novel two-gene requirement for the octanoyltransfer reaction of Bacillus subtilis lipoic acid biosynthesis.</title>
        <authorList>
            <person name="Martin N."/>
            <person name="Christensen Q.H."/>
            <person name="Mansilla M.C."/>
            <person name="Cronan J.E."/>
            <person name="de Mendoza D."/>
        </authorList>
    </citation>
    <scope>FUNCTION</scope>
    <scope>DISRUPTION PHENOTYPE</scope>
    <source>
        <strain>168 / JH642</strain>
    </source>
</reference>
<reference key="5">
    <citation type="journal article" date="2011" name="Mol. Microbiol.">
        <title>A novel amidotransferase required for lipoic acid cofactor assembly in Bacillus subtilis.</title>
        <authorList>
            <person name="Christensen Q.H."/>
            <person name="Martin N."/>
            <person name="Mansilla M.C."/>
            <person name="de Mendoza D."/>
            <person name="Cronan J.E."/>
        </authorList>
    </citation>
    <scope>FUNCTION</scope>
    <scope>SPECIFICITY FOR GCVH</scope>
    <source>
        <strain>168 / JH642</strain>
    </source>
</reference>
<protein>
    <recommendedName>
        <fullName>Octanoyltransferase LipM</fullName>
        <ecNumber>2.3.1.181</ecNumber>
    </recommendedName>
    <alternativeName>
        <fullName>Octanoyl-[acyl-carrier-protein]:[GcvH] N-octanoyltransferase</fullName>
    </alternativeName>
</protein>
<dbReference type="EC" id="2.3.1.181"/>
<dbReference type="EMBL" id="D84432">
    <property type="protein sequence ID" value="BAA12550.1"/>
    <property type="status" value="ALT_INIT"/>
    <property type="molecule type" value="Genomic_DNA"/>
</dbReference>
<dbReference type="EMBL" id="AL009126">
    <property type="protein sequence ID" value="CAB14384.1"/>
    <property type="molecule type" value="Genomic_DNA"/>
</dbReference>
<dbReference type="PIR" id="D69959">
    <property type="entry name" value="D69959"/>
</dbReference>
<dbReference type="RefSeq" id="NP_390333.1">
    <property type="nucleotide sequence ID" value="NC_000964.3"/>
</dbReference>
<dbReference type="RefSeq" id="WP_004398586.1">
    <property type="nucleotide sequence ID" value="NZ_OZ025638.1"/>
</dbReference>
<dbReference type="SMR" id="P54511"/>
<dbReference type="FunCoup" id="P54511">
    <property type="interactions" value="168"/>
</dbReference>
<dbReference type="STRING" id="224308.BSU24530"/>
<dbReference type="PaxDb" id="224308-BSU24530"/>
<dbReference type="DNASU" id="938551"/>
<dbReference type="EnsemblBacteria" id="CAB14384">
    <property type="protein sequence ID" value="CAB14384"/>
    <property type="gene ID" value="BSU_24530"/>
</dbReference>
<dbReference type="GeneID" id="938551"/>
<dbReference type="KEGG" id="bsu:BSU24530"/>
<dbReference type="PATRIC" id="fig|224308.179.peg.2671"/>
<dbReference type="eggNOG" id="COG0095">
    <property type="taxonomic scope" value="Bacteria"/>
</dbReference>
<dbReference type="InParanoid" id="P54511"/>
<dbReference type="OrthoDB" id="9774653at2"/>
<dbReference type="PhylomeDB" id="P54511"/>
<dbReference type="BioCyc" id="BSUB:BSU24530-MONOMER"/>
<dbReference type="BioCyc" id="MetaCyc:BSU24530-MONOMER"/>
<dbReference type="Proteomes" id="UP000001570">
    <property type="component" value="Chromosome"/>
</dbReference>
<dbReference type="GO" id="GO:0033819">
    <property type="term" value="F:lipoyl(octanoyl) transferase activity"/>
    <property type="evidence" value="ECO:0000314"/>
    <property type="project" value="UniProtKB"/>
</dbReference>
<dbReference type="GO" id="GO:0009107">
    <property type="term" value="P:lipoate biosynthetic process"/>
    <property type="evidence" value="ECO:0000315"/>
    <property type="project" value="UniProtKB"/>
</dbReference>
<dbReference type="GO" id="GO:0009249">
    <property type="term" value="P:protein lipoylation"/>
    <property type="evidence" value="ECO:0000315"/>
    <property type="project" value="UniProtKB"/>
</dbReference>
<dbReference type="GO" id="GO:0036211">
    <property type="term" value="P:protein modification process"/>
    <property type="evidence" value="ECO:0000314"/>
    <property type="project" value="UniProtKB"/>
</dbReference>
<dbReference type="CDD" id="cd16443">
    <property type="entry name" value="LplA"/>
    <property type="match status" value="1"/>
</dbReference>
<dbReference type="FunFam" id="3.30.930.10:FF:000199">
    <property type="entry name" value="Octanoyltransferase LipM"/>
    <property type="match status" value="1"/>
</dbReference>
<dbReference type="Gene3D" id="3.30.930.10">
    <property type="entry name" value="Bira Bifunctional Protein, Domain 2"/>
    <property type="match status" value="1"/>
</dbReference>
<dbReference type="HAMAP" id="MF_02118">
    <property type="entry name" value="LipM"/>
    <property type="match status" value="1"/>
</dbReference>
<dbReference type="InterPro" id="IPR045864">
    <property type="entry name" value="aa-tRNA-synth_II/BPL/LPL"/>
</dbReference>
<dbReference type="InterPro" id="IPR004143">
    <property type="entry name" value="BPL_LPL_catalytic"/>
</dbReference>
<dbReference type="InterPro" id="IPR024898">
    <property type="entry name" value="LipM"/>
</dbReference>
<dbReference type="InterPro" id="IPR050664">
    <property type="entry name" value="Octanoyltrans_LipM/LipL"/>
</dbReference>
<dbReference type="PANTHER" id="PTHR43679:SF2">
    <property type="entry name" value="OCTANOYL-[GCVH]:PROTEIN N-OCTANOYLTRANSFERASE"/>
    <property type="match status" value="1"/>
</dbReference>
<dbReference type="PANTHER" id="PTHR43679">
    <property type="entry name" value="OCTANOYLTRANSFERASE LIPM-RELATED"/>
    <property type="match status" value="1"/>
</dbReference>
<dbReference type="Pfam" id="PF21948">
    <property type="entry name" value="LplA-B_cat"/>
    <property type="match status" value="1"/>
</dbReference>
<dbReference type="SUPFAM" id="SSF55681">
    <property type="entry name" value="Class II aaRS and biotin synthetases"/>
    <property type="match status" value="1"/>
</dbReference>
<dbReference type="PROSITE" id="PS51733">
    <property type="entry name" value="BPL_LPL_CATALYTIC"/>
    <property type="match status" value="1"/>
</dbReference>
<comment type="function">
    <text evidence="2 3 4">Catalyzes the transfer of endogenously produced octanoic acid from octanoyl-acyl-carrier-protein onto the lipoyl domain of GcvH, an intermediate carrier during protein lipoylation. Is also able to catalyze the reverse reaction. Octanoyl-CoA can also act as a substrate although very poorly. Does not display lipoate protein ligase activity, despite its sequence similarity to LplA.</text>
</comment>
<comment type="catalytic activity">
    <reaction evidence="2">
        <text>octanoyl-[ACP] + L-lysyl-[protein] = N(6)-octanoyl-L-lysyl-[protein] + holo-[ACP] + H(+)</text>
        <dbReference type="Rhea" id="RHEA:17665"/>
        <dbReference type="Rhea" id="RHEA-COMP:9636"/>
        <dbReference type="Rhea" id="RHEA-COMP:9685"/>
        <dbReference type="Rhea" id="RHEA-COMP:9752"/>
        <dbReference type="Rhea" id="RHEA-COMP:9928"/>
        <dbReference type="ChEBI" id="CHEBI:15378"/>
        <dbReference type="ChEBI" id="CHEBI:29969"/>
        <dbReference type="ChEBI" id="CHEBI:64479"/>
        <dbReference type="ChEBI" id="CHEBI:78463"/>
        <dbReference type="ChEBI" id="CHEBI:78809"/>
        <dbReference type="EC" id="2.3.1.181"/>
    </reaction>
</comment>
<comment type="pathway">
    <text evidence="2">Protein modification; protein lipoylation via endogenous pathway; protein N(6)-(lipoyl)lysine from octanoyl-[acyl-carrier-protein].</text>
</comment>
<comment type="subunit">
    <text evidence="6">Monomer.</text>
</comment>
<comment type="disruption phenotype">
    <text evidence="3">Cells lacking this gene are auxotrophic for lipoic acid when grown in minimal medium but grow as well as the wild-type strain in the presence of lipoic acid. The requirement for lipoic acid can be bypassed by addition of both acetate and branched-chain fatty acid (BCFA) precursors. The mutant cells are devoid of lipoylated proteins.</text>
</comment>
<comment type="miscellaneous">
    <text>In the reaction, the free carboxyl group of octanoic acid is attached via an amide linkage to the epsilon-amino group of a specific lysine residue of lipoyl domains of lipoate-dependent enzymes. The reaction proceeds via an octanoyl-thioester enzyme intermediate.</text>
</comment>
<comment type="similarity">
    <text evidence="5">Belongs to the octanoyltransferase LipM family.</text>
</comment>
<comment type="sequence caution" evidence="5">
    <conflict type="erroneous initiation">
        <sequence resource="EMBL-CDS" id="BAA12550"/>
    </conflict>
</comment>
<sequence>MQKETWRFIDSGNASPAFNMALDEALLYWHSEKKIPPVIRFYGWNPATLSVGYFQNIKKEINFEAVHKYNLGFVRRPTGGRGVLHDQELTYSVIVSEEHPEMPATVTEAYRVISEGILQGFRNLGLDAYFAIPRTEKEKESLKNPRSSVCFDAPSWYELVVEGRKVAGSAQTRQKGVILQHGSILLDLDEDKLFDLFLYPSERVRERMQRNFKNKAVAINELIEKRVTMDEARKAFKEGFETGLNIHLEPYELSQEELDFVHHLAETKYASDEWNYKR</sequence>
<evidence type="ECO:0000255" key="1">
    <source>
        <dbReference type="PROSITE-ProRule" id="PRU01067"/>
    </source>
</evidence>
<evidence type="ECO:0000269" key="2">
    <source>
    </source>
</evidence>
<evidence type="ECO:0000269" key="3">
    <source>
    </source>
</evidence>
<evidence type="ECO:0000269" key="4">
    <source>
    </source>
</evidence>
<evidence type="ECO:0000305" key="5"/>
<evidence type="ECO:0000305" key="6">
    <source>
    </source>
</evidence>
<proteinExistence type="evidence at protein level"/>
<keyword id="KW-0012">Acyltransferase</keyword>
<keyword id="KW-1185">Reference proteome</keyword>
<keyword id="KW-0808">Transferase</keyword>
<organism>
    <name type="scientific">Bacillus subtilis (strain 168)</name>
    <dbReference type="NCBI Taxonomy" id="224308"/>
    <lineage>
        <taxon>Bacteria</taxon>
        <taxon>Bacillati</taxon>
        <taxon>Bacillota</taxon>
        <taxon>Bacilli</taxon>
        <taxon>Bacillales</taxon>
        <taxon>Bacillaceae</taxon>
        <taxon>Bacillus</taxon>
    </lineage>
</organism>
<gene>
    <name type="primary">lipM</name>
    <name type="synonym">yqhM</name>
    <name type="ordered locus">BSU24530</name>
</gene>
<name>LIPM_BACSU</name>